<accession>B4SP92</accession>
<organism>
    <name type="scientific">Stenotrophomonas maltophilia (strain R551-3)</name>
    <dbReference type="NCBI Taxonomy" id="391008"/>
    <lineage>
        <taxon>Bacteria</taxon>
        <taxon>Pseudomonadati</taxon>
        <taxon>Pseudomonadota</taxon>
        <taxon>Gammaproteobacteria</taxon>
        <taxon>Lysobacterales</taxon>
        <taxon>Lysobacteraceae</taxon>
        <taxon>Stenotrophomonas</taxon>
        <taxon>Stenotrophomonas maltophilia group</taxon>
    </lineage>
</organism>
<keyword id="KW-0687">Ribonucleoprotein</keyword>
<keyword id="KW-0689">Ribosomal protein</keyword>
<keyword id="KW-0694">RNA-binding</keyword>
<keyword id="KW-0699">rRNA-binding</keyword>
<sequence>MQLILLQKVTNLGNLGDLVDVKPGYGRNFLVPQGKAVPATESNKAEFEAKRADYEAKAQAIHADADARKAKLEGASVTIAANASTEGKLYGSVGAREIADAFTAAGLELNKSEVILGEGAFRNIGEYDVLVHLHADVETTVKVVVEAEKA</sequence>
<protein>
    <recommendedName>
        <fullName evidence="1">Large ribosomal subunit protein bL9</fullName>
    </recommendedName>
    <alternativeName>
        <fullName evidence="2">50S ribosomal protein L9</fullName>
    </alternativeName>
</protein>
<name>RL9_STRM5</name>
<evidence type="ECO:0000255" key="1">
    <source>
        <dbReference type="HAMAP-Rule" id="MF_00503"/>
    </source>
</evidence>
<evidence type="ECO:0000305" key="2"/>
<gene>
    <name evidence="1" type="primary">rplI</name>
    <name type="ordered locus">Smal_2587</name>
</gene>
<reference key="1">
    <citation type="submission" date="2008-06" db="EMBL/GenBank/DDBJ databases">
        <title>Complete sequence of Stenotrophomonas maltophilia R551-3.</title>
        <authorList>
            <consortium name="US DOE Joint Genome Institute"/>
            <person name="Lucas S."/>
            <person name="Copeland A."/>
            <person name="Lapidus A."/>
            <person name="Glavina del Rio T."/>
            <person name="Dalin E."/>
            <person name="Tice H."/>
            <person name="Pitluck S."/>
            <person name="Chain P."/>
            <person name="Malfatti S."/>
            <person name="Shin M."/>
            <person name="Vergez L."/>
            <person name="Lang D."/>
            <person name="Schmutz J."/>
            <person name="Larimer F."/>
            <person name="Land M."/>
            <person name="Hauser L."/>
            <person name="Kyrpides N."/>
            <person name="Mikhailova N."/>
            <person name="Taghavi S."/>
            <person name="Monchy S."/>
            <person name="Newman L."/>
            <person name="Vangronsveld J."/>
            <person name="van der Lelie D."/>
            <person name="Richardson P."/>
        </authorList>
    </citation>
    <scope>NUCLEOTIDE SEQUENCE [LARGE SCALE GENOMIC DNA]</scope>
    <source>
        <strain>R551-3</strain>
    </source>
</reference>
<dbReference type="EMBL" id="CP001111">
    <property type="protein sequence ID" value="ACF52287.1"/>
    <property type="molecule type" value="Genomic_DNA"/>
</dbReference>
<dbReference type="RefSeq" id="WP_006376492.1">
    <property type="nucleotide sequence ID" value="NC_011071.1"/>
</dbReference>
<dbReference type="SMR" id="B4SP92"/>
<dbReference type="STRING" id="391008.Smal_2587"/>
<dbReference type="KEGG" id="smt:Smal_2587"/>
<dbReference type="eggNOG" id="COG0359">
    <property type="taxonomic scope" value="Bacteria"/>
</dbReference>
<dbReference type="HOGENOM" id="CLU_078938_4_1_6"/>
<dbReference type="OrthoDB" id="9788336at2"/>
<dbReference type="Proteomes" id="UP000001867">
    <property type="component" value="Chromosome"/>
</dbReference>
<dbReference type="GO" id="GO:1990904">
    <property type="term" value="C:ribonucleoprotein complex"/>
    <property type="evidence" value="ECO:0007669"/>
    <property type="project" value="UniProtKB-KW"/>
</dbReference>
<dbReference type="GO" id="GO:0005840">
    <property type="term" value="C:ribosome"/>
    <property type="evidence" value="ECO:0007669"/>
    <property type="project" value="UniProtKB-KW"/>
</dbReference>
<dbReference type="GO" id="GO:0019843">
    <property type="term" value="F:rRNA binding"/>
    <property type="evidence" value="ECO:0007669"/>
    <property type="project" value="UniProtKB-UniRule"/>
</dbReference>
<dbReference type="GO" id="GO:0003735">
    <property type="term" value="F:structural constituent of ribosome"/>
    <property type="evidence" value="ECO:0007669"/>
    <property type="project" value="InterPro"/>
</dbReference>
<dbReference type="GO" id="GO:0006412">
    <property type="term" value="P:translation"/>
    <property type="evidence" value="ECO:0007669"/>
    <property type="project" value="UniProtKB-UniRule"/>
</dbReference>
<dbReference type="Gene3D" id="3.10.430.100">
    <property type="entry name" value="Ribosomal protein L9, C-terminal domain"/>
    <property type="match status" value="1"/>
</dbReference>
<dbReference type="Gene3D" id="3.40.5.10">
    <property type="entry name" value="Ribosomal protein L9, N-terminal domain"/>
    <property type="match status" value="1"/>
</dbReference>
<dbReference type="HAMAP" id="MF_00503">
    <property type="entry name" value="Ribosomal_bL9"/>
    <property type="match status" value="1"/>
</dbReference>
<dbReference type="InterPro" id="IPR000244">
    <property type="entry name" value="Ribosomal_bL9"/>
</dbReference>
<dbReference type="InterPro" id="IPR009027">
    <property type="entry name" value="Ribosomal_bL9/RNase_H1_N"/>
</dbReference>
<dbReference type="InterPro" id="IPR020594">
    <property type="entry name" value="Ribosomal_bL9_bac/chp"/>
</dbReference>
<dbReference type="InterPro" id="IPR020069">
    <property type="entry name" value="Ribosomal_bL9_C"/>
</dbReference>
<dbReference type="InterPro" id="IPR036791">
    <property type="entry name" value="Ribosomal_bL9_C_sf"/>
</dbReference>
<dbReference type="InterPro" id="IPR020070">
    <property type="entry name" value="Ribosomal_bL9_N"/>
</dbReference>
<dbReference type="InterPro" id="IPR036935">
    <property type="entry name" value="Ribosomal_bL9_N_sf"/>
</dbReference>
<dbReference type="NCBIfam" id="TIGR00158">
    <property type="entry name" value="L9"/>
    <property type="match status" value="1"/>
</dbReference>
<dbReference type="PANTHER" id="PTHR21368">
    <property type="entry name" value="50S RIBOSOMAL PROTEIN L9"/>
    <property type="match status" value="1"/>
</dbReference>
<dbReference type="Pfam" id="PF03948">
    <property type="entry name" value="Ribosomal_L9_C"/>
    <property type="match status" value="1"/>
</dbReference>
<dbReference type="Pfam" id="PF01281">
    <property type="entry name" value="Ribosomal_L9_N"/>
    <property type="match status" value="1"/>
</dbReference>
<dbReference type="SUPFAM" id="SSF55658">
    <property type="entry name" value="L9 N-domain-like"/>
    <property type="match status" value="1"/>
</dbReference>
<dbReference type="SUPFAM" id="SSF55653">
    <property type="entry name" value="Ribosomal protein L9 C-domain"/>
    <property type="match status" value="1"/>
</dbReference>
<dbReference type="PROSITE" id="PS00651">
    <property type="entry name" value="RIBOSOMAL_L9"/>
    <property type="match status" value="1"/>
</dbReference>
<proteinExistence type="inferred from homology"/>
<feature type="chain" id="PRO_1000126976" description="Large ribosomal subunit protein bL9">
    <location>
        <begin position="1"/>
        <end position="150"/>
    </location>
</feature>
<comment type="function">
    <text evidence="1">Binds to the 23S rRNA.</text>
</comment>
<comment type="similarity">
    <text evidence="1">Belongs to the bacterial ribosomal protein bL9 family.</text>
</comment>